<sequence length="71" mass="7988">MSKTKTFEENLQDLETIVNKLENGDVPLEEAISEFQKGMLLSKELQKTLQAAEKTLVKVMQADGTEVDMDD</sequence>
<gene>
    <name evidence="1" type="primary">xseB</name>
    <name type="ordered locus">M6_Spy1252</name>
</gene>
<protein>
    <recommendedName>
        <fullName evidence="1">Exodeoxyribonuclease 7 small subunit</fullName>
        <ecNumber evidence="1">3.1.11.6</ecNumber>
    </recommendedName>
    <alternativeName>
        <fullName evidence="1">Exodeoxyribonuclease VII small subunit</fullName>
        <shortName evidence="1">Exonuclease VII small subunit</shortName>
    </alternativeName>
</protein>
<comment type="function">
    <text evidence="1">Bidirectionally degrades single-stranded DNA into large acid-insoluble oligonucleotides, which are then degraded further into small acid-soluble oligonucleotides.</text>
</comment>
<comment type="catalytic activity">
    <reaction evidence="1">
        <text>Exonucleolytic cleavage in either 5'- to 3'- or 3'- to 5'-direction to yield nucleoside 5'-phosphates.</text>
        <dbReference type="EC" id="3.1.11.6"/>
    </reaction>
</comment>
<comment type="subunit">
    <text evidence="1">Heterooligomer composed of large and small subunits.</text>
</comment>
<comment type="subcellular location">
    <subcellularLocation>
        <location evidence="1">Cytoplasm</location>
    </subcellularLocation>
</comment>
<comment type="similarity">
    <text evidence="1">Belongs to the XseB family.</text>
</comment>
<organism>
    <name type="scientific">Streptococcus pyogenes serotype M6 (strain ATCC BAA-946 / MGAS10394)</name>
    <dbReference type="NCBI Taxonomy" id="286636"/>
    <lineage>
        <taxon>Bacteria</taxon>
        <taxon>Bacillati</taxon>
        <taxon>Bacillota</taxon>
        <taxon>Bacilli</taxon>
        <taxon>Lactobacillales</taxon>
        <taxon>Streptococcaceae</taxon>
        <taxon>Streptococcus</taxon>
    </lineage>
</organism>
<feature type="chain" id="PRO_0000207020" description="Exodeoxyribonuclease 7 small subunit">
    <location>
        <begin position="1"/>
        <end position="71"/>
    </location>
</feature>
<proteinExistence type="inferred from homology"/>
<name>EX7S_STRP6</name>
<keyword id="KW-0963">Cytoplasm</keyword>
<keyword id="KW-0269">Exonuclease</keyword>
<keyword id="KW-0378">Hydrolase</keyword>
<keyword id="KW-0540">Nuclease</keyword>
<evidence type="ECO:0000255" key="1">
    <source>
        <dbReference type="HAMAP-Rule" id="MF_00337"/>
    </source>
</evidence>
<dbReference type="EC" id="3.1.11.6" evidence="1"/>
<dbReference type="EMBL" id="CP000003">
    <property type="protein sequence ID" value="AAT87387.1"/>
    <property type="molecule type" value="Genomic_DNA"/>
</dbReference>
<dbReference type="RefSeq" id="WP_002983901.1">
    <property type="nucleotide sequence ID" value="NC_006086.1"/>
</dbReference>
<dbReference type="SMR" id="Q5XB26"/>
<dbReference type="KEGG" id="spa:M6_Spy1252"/>
<dbReference type="HOGENOM" id="CLU_145918_3_2_9"/>
<dbReference type="Proteomes" id="UP000001167">
    <property type="component" value="Chromosome"/>
</dbReference>
<dbReference type="GO" id="GO:0005829">
    <property type="term" value="C:cytosol"/>
    <property type="evidence" value="ECO:0007669"/>
    <property type="project" value="TreeGrafter"/>
</dbReference>
<dbReference type="GO" id="GO:0009318">
    <property type="term" value="C:exodeoxyribonuclease VII complex"/>
    <property type="evidence" value="ECO:0007669"/>
    <property type="project" value="InterPro"/>
</dbReference>
<dbReference type="GO" id="GO:0008855">
    <property type="term" value="F:exodeoxyribonuclease VII activity"/>
    <property type="evidence" value="ECO:0007669"/>
    <property type="project" value="UniProtKB-UniRule"/>
</dbReference>
<dbReference type="GO" id="GO:0006308">
    <property type="term" value="P:DNA catabolic process"/>
    <property type="evidence" value="ECO:0007669"/>
    <property type="project" value="UniProtKB-UniRule"/>
</dbReference>
<dbReference type="Gene3D" id="1.10.287.1040">
    <property type="entry name" value="Exonuclease VII, small subunit"/>
    <property type="match status" value="1"/>
</dbReference>
<dbReference type="HAMAP" id="MF_00337">
    <property type="entry name" value="Exonuc_7_S"/>
    <property type="match status" value="1"/>
</dbReference>
<dbReference type="InterPro" id="IPR003761">
    <property type="entry name" value="Exonuc_VII_S"/>
</dbReference>
<dbReference type="InterPro" id="IPR037004">
    <property type="entry name" value="Exonuc_VII_ssu_sf"/>
</dbReference>
<dbReference type="NCBIfam" id="NF002138">
    <property type="entry name" value="PRK00977.1-2"/>
    <property type="match status" value="1"/>
</dbReference>
<dbReference type="NCBIfam" id="TIGR01280">
    <property type="entry name" value="xseB"/>
    <property type="match status" value="1"/>
</dbReference>
<dbReference type="PANTHER" id="PTHR34137">
    <property type="entry name" value="EXODEOXYRIBONUCLEASE 7 SMALL SUBUNIT"/>
    <property type="match status" value="1"/>
</dbReference>
<dbReference type="PANTHER" id="PTHR34137:SF1">
    <property type="entry name" value="EXODEOXYRIBONUCLEASE 7 SMALL SUBUNIT"/>
    <property type="match status" value="1"/>
</dbReference>
<dbReference type="Pfam" id="PF02609">
    <property type="entry name" value="Exonuc_VII_S"/>
    <property type="match status" value="1"/>
</dbReference>
<dbReference type="PIRSF" id="PIRSF006488">
    <property type="entry name" value="Exonuc_VII_S"/>
    <property type="match status" value="1"/>
</dbReference>
<dbReference type="SUPFAM" id="SSF116842">
    <property type="entry name" value="XseB-like"/>
    <property type="match status" value="1"/>
</dbReference>
<accession>Q5XB26</accession>
<reference key="1">
    <citation type="journal article" date="2004" name="J. Infect. Dis.">
        <title>Progress toward characterization of the group A Streptococcus metagenome: complete genome sequence of a macrolide-resistant serotype M6 strain.</title>
        <authorList>
            <person name="Banks D.J."/>
            <person name="Porcella S.F."/>
            <person name="Barbian K.D."/>
            <person name="Beres S.B."/>
            <person name="Philips L.E."/>
            <person name="Voyich J.M."/>
            <person name="DeLeo F.R."/>
            <person name="Martin J.M."/>
            <person name="Somerville G.A."/>
            <person name="Musser J.M."/>
        </authorList>
    </citation>
    <scope>NUCLEOTIDE SEQUENCE [LARGE SCALE GENOMIC DNA]</scope>
    <source>
        <strain>ATCC BAA-946 / MGAS10394</strain>
    </source>
</reference>